<organism>
    <name type="scientific">Bos taurus</name>
    <name type="common">Bovine</name>
    <dbReference type="NCBI Taxonomy" id="9913"/>
    <lineage>
        <taxon>Eukaryota</taxon>
        <taxon>Metazoa</taxon>
        <taxon>Chordata</taxon>
        <taxon>Craniata</taxon>
        <taxon>Vertebrata</taxon>
        <taxon>Euteleostomi</taxon>
        <taxon>Mammalia</taxon>
        <taxon>Eutheria</taxon>
        <taxon>Laurasiatheria</taxon>
        <taxon>Artiodactyla</taxon>
        <taxon>Ruminantia</taxon>
        <taxon>Pecora</taxon>
        <taxon>Bovidae</taxon>
        <taxon>Bovinae</taxon>
        <taxon>Bos</taxon>
    </lineage>
</organism>
<evidence type="ECO:0000250" key="1"/>
<evidence type="ECO:0000250" key="2">
    <source>
        <dbReference type="UniProtKB" id="Q8TEB7"/>
    </source>
</evidence>
<evidence type="ECO:0000255" key="3"/>
<evidence type="ECO:0000255" key="4">
    <source>
        <dbReference type="PROSITE-ProRule" id="PRU00175"/>
    </source>
</evidence>
<evidence type="ECO:0000256" key="5">
    <source>
        <dbReference type="SAM" id="MobiDB-lite"/>
    </source>
</evidence>
<evidence type="ECO:0000305" key="6"/>
<comment type="function">
    <text evidence="2">E3 ubiquitin-protein ligase that catalyzes 'Lys-27', 'Lys-48'- or 'Lys-63'-linked polyubiquitin chains formation and plays a role in different biological processes such as modulation of immune response, cytoskeletal dynamics or protein homeostasis. Inhibits IL2 and IL4 transcription, thereby playing an important role in the induction of the anergic phenotype, a long-term stable state of T-lymphocyte unresponsiveness to antigenic stimulation associated with the blockade of interleukin production. Ubiquitinates ARPC5 with 'Lys-48' linkages and COR1A with 'Lys-63' linkages leading to their degradation, down-regulation of these cytoskeletal components results in impaired lamellipodium formation and reduced accumulation of F-actin at the immunological synapse. Functions in the patterning of the dorsal ectoderm; sensitizes ectoderm to respond to neural-inducing signals. Plays a positive role in innate immune response by promoting 'Lys-63'-linked ubiquitination of TBK1 after RNA- or DNA-virus infection. Regulates alveolar macrophage activation and neutrophil infiltration by interacting with TLR4, targeting it for degradation, and inhibiting NF-kappa-B activation, hence decreasing pro-inflammatory cytokines. Negatively regulates the IL-3/STAT5 signaling pathway by facilitating 'Lys-27'-linked polyubiquitination of IL3RA leading to its degradation via lysosomal pathway. Directly regulates the N-glycosylation process in the endoplasmic reticulum by targeting the glycosyl-transferase RPN1 for ubiquitination and degradation. Other substrates targeted for degradation by RNF128 include transmembrane proteins CD40L, CD83 or the tetraspanin CD151.</text>
</comment>
<comment type="catalytic activity">
    <reaction evidence="2">
        <text>S-ubiquitinyl-[E2 ubiquitin-conjugating enzyme]-L-cysteine + [acceptor protein]-L-lysine = [E2 ubiquitin-conjugating enzyme]-L-cysteine + N(6)-ubiquitinyl-[acceptor protein]-L-lysine.</text>
        <dbReference type="EC" id="2.3.2.27"/>
    </reaction>
</comment>
<comment type="pathway">
    <text evidence="2">Protein modification; protein ubiquitination.</text>
</comment>
<comment type="subcellular location">
    <subcellularLocation>
        <location evidence="2">Cytoplasm</location>
    </subcellularLocation>
    <subcellularLocation>
        <location evidence="2">Endomembrane system</location>
        <topology evidence="2">Single-pass membrane protein</topology>
    </subcellularLocation>
    <subcellularLocation>
        <location evidence="2">Cytoplasm</location>
        <location evidence="2">Cytoskeleton</location>
    </subcellularLocation>
    <subcellularLocation>
        <location evidence="2">Cytoplasm</location>
        <location evidence="2">Perinuclear region</location>
    </subcellularLocation>
    <text evidence="1">Localized in an asymmetric perinuclear punctate manner. Localizes to the internal pool of the transferrin recycling endosomal pathway. Partially colocalized with the endoplasmic reticulum resident HSPA5, with Golgi resident STX5, and with the late endosomal GTPase RAB7A (By similarity).</text>
</comment>
<comment type="domain">
    <text evidence="2">Binding to E2 ubiquitin-conjugating enzyme requires an intact RING finger domain.</text>
</comment>
<comment type="PTM">
    <text evidence="2">Auto-ubiquitinated. Controls the development of T-cell clonal anergy by ubiquitination.</text>
</comment>
<protein>
    <recommendedName>
        <fullName>E3 ubiquitin-protein ligase RNF128</fullName>
        <ecNumber>2.3.2.27</ecNumber>
    </recommendedName>
    <alternativeName>
        <fullName>RING finger protein 128</fullName>
    </alternativeName>
    <alternativeName>
        <fullName evidence="6">RING-type E3 ubiquitin transferase RNF128</fullName>
    </alternativeName>
</protein>
<feature type="signal peptide" evidence="3">
    <location>
        <begin position="1"/>
        <end position="38"/>
    </location>
</feature>
<feature type="chain" id="PRO_0000261411" description="E3 ubiquitin-protein ligase RNF128">
    <location>
        <begin position="39"/>
        <end position="431"/>
    </location>
</feature>
<feature type="transmembrane region" description="Helical" evidence="3">
    <location>
        <begin position="211"/>
        <end position="231"/>
    </location>
</feature>
<feature type="domain" description="PA">
    <location>
        <begin position="75"/>
        <end position="186"/>
    </location>
</feature>
<feature type="zinc finger region" description="RING-type; atypical" evidence="4">
    <location>
        <begin position="280"/>
        <end position="321"/>
    </location>
</feature>
<feature type="region of interest" description="Disordered" evidence="5">
    <location>
        <begin position="345"/>
        <end position="431"/>
    </location>
</feature>
<feature type="compositionally biased region" description="Polar residues" evidence="5">
    <location>
        <begin position="345"/>
        <end position="354"/>
    </location>
</feature>
<feature type="glycosylation site" description="N-linked (GlcNAc...) asparagine" evidence="3">
    <location>
        <position position="48"/>
    </location>
</feature>
<feature type="glycosylation site" description="N-linked (GlcNAc...) asparagine" evidence="3">
    <location>
        <position position="59"/>
    </location>
</feature>
<feature type="glycosylation site" description="N-linked (GlcNAc...) asparagine" evidence="3">
    <location>
        <position position="101"/>
    </location>
</feature>
<reference key="1">
    <citation type="submission" date="2006-02" db="EMBL/GenBank/DDBJ databases">
        <authorList>
            <consortium name="NIH - Mammalian Gene Collection (MGC) project"/>
        </authorList>
    </citation>
    <scope>NUCLEOTIDE SEQUENCE [LARGE SCALE MRNA]</scope>
    <source>
        <strain>Hereford</strain>
        <tissue>Testis</tissue>
    </source>
</reference>
<accession>Q29RU0</accession>
<name>RN128_BOVIN</name>
<gene>
    <name type="primary">RNF128</name>
</gene>
<sequence length="431" mass="46881">MGQLPGAGVFCRGGCGFSRLLAWCFLLVLSPQTPGSRGAEAVWTAYLNVSWRVPHTGVNRTVWELSEEGVYGQDSPLEPVAGVLVPPDGPGALNACNPHTNFTVPTVPGDWGSSVQVSWLALIQRGGGCTFADKIHLAYERGASGAVIFNFPGTRNEVIPMSHPGAGDIVAIMIGNLKGTKILQSIQRGIQVTMVIEVGKKHGPWVNHYSIFFVSVSFFIITAATVGYFIFYSARRLRNARAQSRKQRQLKADAKKAIGRLQLRTQKQGDKEIGPDGDSCAVCIELYKPNDLVRILTCNHVFHKTCVDPWLLEHRTCPMCKCDILKALGIEVDVEDGSVSLQVPVSNETSSNASPHEEDNRSETASSGYASVQGADEPPLEEHAHSANENLQLVNHEANSMAVDVVPHVDNPTFEEDESPDQETTVREIKS</sequence>
<proteinExistence type="evidence at transcript level"/>
<keyword id="KW-0963">Cytoplasm</keyword>
<keyword id="KW-0206">Cytoskeleton</keyword>
<keyword id="KW-0325">Glycoprotein</keyword>
<keyword id="KW-0472">Membrane</keyword>
<keyword id="KW-0479">Metal-binding</keyword>
<keyword id="KW-1185">Reference proteome</keyword>
<keyword id="KW-0732">Signal</keyword>
<keyword id="KW-0808">Transferase</keyword>
<keyword id="KW-0812">Transmembrane</keyword>
<keyword id="KW-1133">Transmembrane helix</keyword>
<keyword id="KW-0832">Ubl conjugation</keyword>
<keyword id="KW-0833">Ubl conjugation pathway</keyword>
<keyword id="KW-0862">Zinc</keyword>
<keyword id="KW-0863">Zinc-finger</keyword>
<dbReference type="EC" id="2.3.2.27"/>
<dbReference type="EMBL" id="BC114021">
    <property type="protein sequence ID" value="AAI14022.1"/>
    <property type="molecule type" value="mRNA"/>
</dbReference>
<dbReference type="RefSeq" id="NP_001069539.1">
    <property type="nucleotide sequence ID" value="NM_001076071.2"/>
</dbReference>
<dbReference type="SMR" id="Q29RU0"/>
<dbReference type="FunCoup" id="Q29RU0">
    <property type="interactions" value="76"/>
</dbReference>
<dbReference type="STRING" id="9913.ENSBTAP00000031108"/>
<dbReference type="GlyCosmos" id="Q29RU0">
    <property type="glycosylation" value="3 sites, No reported glycans"/>
</dbReference>
<dbReference type="GlyGen" id="Q29RU0">
    <property type="glycosylation" value="3 sites"/>
</dbReference>
<dbReference type="PaxDb" id="9913-ENSBTAP00000031108"/>
<dbReference type="GeneID" id="535869"/>
<dbReference type="KEGG" id="bta:535869"/>
<dbReference type="CTD" id="79589"/>
<dbReference type="eggNOG" id="KOG4628">
    <property type="taxonomic scope" value="Eukaryota"/>
</dbReference>
<dbReference type="InParanoid" id="Q29RU0"/>
<dbReference type="OrthoDB" id="5357315at2759"/>
<dbReference type="UniPathway" id="UPA00143"/>
<dbReference type="Proteomes" id="UP000009136">
    <property type="component" value="Unplaced"/>
</dbReference>
<dbReference type="GO" id="GO:0005737">
    <property type="term" value="C:cytoplasm"/>
    <property type="evidence" value="ECO:0000318"/>
    <property type="project" value="GO_Central"/>
</dbReference>
<dbReference type="GO" id="GO:0005856">
    <property type="term" value="C:cytoskeleton"/>
    <property type="evidence" value="ECO:0007669"/>
    <property type="project" value="UniProtKB-SubCell"/>
</dbReference>
<dbReference type="GO" id="GO:0005783">
    <property type="term" value="C:endoplasmic reticulum"/>
    <property type="evidence" value="ECO:0000318"/>
    <property type="project" value="GO_Central"/>
</dbReference>
<dbReference type="GO" id="GO:0005794">
    <property type="term" value="C:Golgi apparatus"/>
    <property type="evidence" value="ECO:0000318"/>
    <property type="project" value="GO_Central"/>
</dbReference>
<dbReference type="GO" id="GO:0005770">
    <property type="term" value="C:late endosome"/>
    <property type="evidence" value="ECO:0000318"/>
    <property type="project" value="GO_Central"/>
</dbReference>
<dbReference type="GO" id="GO:0016020">
    <property type="term" value="C:membrane"/>
    <property type="evidence" value="ECO:0007669"/>
    <property type="project" value="UniProtKB-KW"/>
</dbReference>
<dbReference type="GO" id="GO:0048471">
    <property type="term" value="C:perinuclear region of cytoplasm"/>
    <property type="evidence" value="ECO:0007669"/>
    <property type="project" value="UniProtKB-SubCell"/>
</dbReference>
<dbReference type="GO" id="GO:0061630">
    <property type="term" value="F:ubiquitin protein ligase activity"/>
    <property type="evidence" value="ECO:0000318"/>
    <property type="project" value="GO_Central"/>
</dbReference>
<dbReference type="GO" id="GO:0008270">
    <property type="term" value="F:zinc ion binding"/>
    <property type="evidence" value="ECO:0007669"/>
    <property type="project" value="UniProtKB-KW"/>
</dbReference>
<dbReference type="GO" id="GO:0016567">
    <property type="term" value="P:protein ubiquitination"/>
    <property type="evidence" value="ECO:0007669"/>
    <property type="project" value="UniProtKB-UniPathway"/>
</dbReference>
<dbReference type="GO" id="GO:0006511">
    <property type="term" value="P:ubiquitin-dependent protein catabolic process"/>
    <property type="evidence" value="ECO:0000318"/>
    <property type="project" value="GO_Central"/>
</dbReference>
<dbReference type="CDD" id="cd02122">
    <property type="entry name" value="PA_GRAIL_like"/>
    <property type="match status" value="1"/>
</dbReference>
<dbReference type="CDD" id="cd16802">
    <property type="entry name" value="RING-H2_RNF128-like"/>
    <property type="match status" value="1"/>
</dbReference>
<dbReference type="FunFam" id="3.50.30.30:FF:000003">
    <property type="entry name" value="E3 ubiquitin-protein ligase RNF128"/>
    <property type="match status" value="1"/>
</dbReference>
<dbReference type="FunFam" id="3.30.40.10:FF:000009">
    <property type="entry name" value="E3 ubiquitin-protein ligase RNF130"/>
    <property type="match status" value="1"/>
</dbReference>
<dbReference type="Gene3D" id="3.50.30.30">
    <property type="match status" value="1"/>
</dbReference>
<dbReference type="Gene3D" id="3.30.40.10">
    <property type="entry name" value="Zinc/RING finger domain, C3HC4 (zinc finger)"/>
    <property type="match status" value="1"/>
</dbReference>
<dbReference type="InterPro" id="IPR046450">
    <property type="entry name" value="PA_dom_sf"/>
</dbReference>
<dbReference type="InterPro" id="IPR003137">
    <property type="entry name" value="PA_domain"/>
</dbReference>
<dbReference type="InterPro" id="IPR001841">
    <property type="entry name" value="Znf_RING"/>
</dbReference>
<dbReference type="InterPro" id="IPR013083">
    <property type="entry name" value="Znf_RING/FYVE/PHD"/>
</dbReference>
<dbReference type="PANTHER" id="PTHR46539">
    <property type="entry name" value="E3 UBIQUITIN-PROTEIN LIGASE ATL42"/>
    <property type="match status" value="1"/>
</dbReference>
<dbReference type="PANTHER" id="PTHR46539:SF27">
    <property type="entry name" value="RING FINGER PROTEIN 128"/>
    <property type="match status" value="1"/>
</dbReference>
<dbReference type="Pfam" id="PF02225">
    <property type="entry name" value="PA"/>
    <property type="match status" value="1"/>
</dbReference>
<dbReference type="Pfam" id="PF13639">
    <property type="entry name" value="zf-RING_2"/>
    <property type="match status" value="1"/>
</dbReference>
<dbReference type="SMART" id="SM00184">
    <property type="entry name" value="RING"/>
    <property type="match status" value="1"/>
</dbReference>
<dbReference type="SUPFAM" id="SSF52025">
    <property type="entry name" value="PA domain"/>
    <property type="match status" value="1"/>
</dbReference>
<dbReference type="SUPFAM" id="SSF57850">
    <property type="entry name" value="RING/U-box"/>
    <property type="match status" value="1"/>
</dbReference>
<dbReference type="PROSITE" id="PS50089">
    <property type="entry name" value="ZF_RING_2"/>
    <property type="match status" value="1"/>
</dbReference>